<proteinExistence type="evidence at protein level"/>
<accession>Q04753</accession>
<feature type="initiator methionine" description="Removed" evidence="1">
    <location>
        <position position="1"/>
    </location>
</feature>
<feature type="chain" id="PRO_0000185157" description="Methylosome subunit pICln">
    <location>
        <begin position="2"/>
        <end position="236"/>
    </location>
</feature>
<feature type="region of interest" description="Disordered" evidence="2">
    <location>
        <begin position="134"/>
        <end position="158"/>
    </location>
</feature>
<feature type="compositionally biased region" description="Acidic residues" evidence="2">
    <location>
        <begin position="138"/>
        <end position="152"/>
    </location>
</feature>
<feature type="modified residue" description="N-acetylserine" evidence="1">
    <location>
        <position position="2"/>
    </location>
</feature>
<feature type="modified residue" description="Phosphoserine" evidence="4">
    <location>
        <position position="95"/>
    </location>
</feature>
<feature type="modified residue" description="Phosphoserine" evidence="1">
    <location>
        <position position="143"/>
    </location>
</feature>
<feature type="modified residue" description="Phosphoserine" evidence="1">
    <location>
        <position position="192"/>
    </location>
</feature>
<feature type="modified residue" description="Phosphoserine" evidence="1">
    <location>
        <position position="194"/>
    </location>
</feature>
<feature type="modified residue" description="Phosphoserine" evidence="1">
    <location>
        <position position="197"/>
    </location>
</feature>
<feature type="modified residue" description="Phosphoserine" evidence="1">
    <location>
        <position position="209"/>
    </location>
</feature>
<feature type="modified residue" description="Phosphothreonine" evidence="1">
    <location>
        <position position="222"/>
    </location>
</feature>
<gene>
    <name type="primary">Clns1a</name>
    <name type="synonym">Icln</name>
    <name type="synonym">Rcl1</name>
</gene>
<organism>
    <name type="scientific">Rattus norvegicus</name>
    <name type="common">Rat</name>
    <dbReference type="NCBI Taxonomy" id="10116"/>
    <lineage>
        <taxon>Eukaryota</taxon>
        <taxon>Metazoa</taxon>
        <taxon>Chordata</taxon>
        <taxon>Craniata</taxon>
        <taxon>Vertebrata</taxon>
        <taxon>Euteleostomi</taxon>
        <taxon>Mammalia</taxon>
        <taxon>Eutheria</taxon>
        <taxon>Euarchontoglires</taxon>
        <taxon>Glires</taxon>
        <taxon>Rodentia</taxon>
        <taxon>Myomorpha</taxon>
        <taxon>Muroidea</taxon>
        <taxon>Muridae</taxon>
        <taxon>Murinae</taxon>
        <taxon>Rattus</taxon>
    </lineage>
</organism>
<protein>
    <recommendedName>
        <fullName>Methylosome subunit pICln</fullName>
    </recommendedName>
    <alternativeName>
        <fullName>Chloride channel, nucleotide sensitive 1A</fullName>
    </alternativeName>
    <alternativeName>
        <fullName>Chloride conductance regulatory protein ICln</fullName>
        <shortName>I(Cln)</shortName>
    </alternativeName>
</protein>
<evidence type="ECO:0000250" key="1">
    <source>
        <dbReference type="UniProtKB" id="P54105"/>
    </source>
</evidence>
<evidence type="ECO:0000256" key="2">
    <source>
        <dbReference type="SAM" id="MobiDB-lite"/>
    </source>
</evidence>
<evidence type="ECO:0000305" key="3"/>
<evidence type="ECO:0007744" key="4">
    <source>
    </source>
</evidence>
<dbReference type="EMBL" id="D17698">
    <property type="protein sequence ID" value="BAA04561.1"/>
    <property type="molecule type" value="mRNA"/>
</dbReference>
<dbReference type="EMBL" id="D13985">
    <property type="protein sequence ID" value="BAA03092.1"/>
    <property type="molecule type" value="mRNA"/>
</dbReference>
<dbReference type="EMBL" id="L26450">
    <property type="protein sequence ID" value="AAC37642.1"/>
    <property type="status" value="ALT_INIT"/>
    <property type="molecule type" value="mRNA"/>
</dbReference>
<dbReference type="PIR" id="B53014">
    <property type="entry name" value="B53014"/>
</dbReference>
<dbReference type="RefSeq" id="NP_113907.1">
    <property type="nucleotide sequence ID" value="NM_031719.1"/>
</dbReference>
<dbReference type="RefSeq" id="XP_006229854.1">
    <property type="nucleotide sequence ID" value="XM_006229792.2"/>
</dbReference>
<dbReference type="SMR" id="Q04753"/>
<dbReference type="BioGRID" id="249275">
    <property type="interactions" value="1"/>
</dbReference>
<dbReference type="FunCoup" id="Q04753">
    <property type="interactions" value="2536"/>
</dbReference>
<dbReference type="STRING" id="10116.ENSRNOP00000017702"/>
<dbReference type="iPTMnet" id="Q04753"/>
<dbReference type="PhosphoSitePlus" id="Q04753"/>
<dbReference type="jPOST" id="Q04753"/>
<dbReference type="PaxDb" id="10116-ENSRNOP00000017702"/>
<dbReference type="GeneID" id="65160"/>
<dbReference type="KEGG" id="rno:65160"/>
<dbReference type="UCSC" id="RGD:61884">
    <property type="organism name" value="rat"/>
</dbReference>
<dbReference type="AGR" id="RGD:61884"/>
<dbReference type="CTD" id="1207"/>
<dbReference type="RGD" id="61884">
    <property type="gene designation" value="Clns1a"/>
</dbReference>
<dbReference type="eggNOG" id="KOG3238">
    <property type="taxonomic scope" value="Eukaryota"/>
</dbReference>
<dbReference type="InParanoid" id="Q04753"/>
<dbReference type="OrthoDB" id="87370at9989"/>
<dbReference type="Reactome" id="R-RNO-191859">
    <property type="pathway name" value="snRNP Assembly"/>
</dbReference>
<dbReference type="PRO" id="PR:Q04753"/>
<dbReference type="Proteomes" id="UP000002494">
    <property type="component" value="Unplaced"/>
</dbReference>
<dbReference type="GO" id="GO:0005856">
    <property type="term" value="C:cytoskeleton"/>
    <property type="evidence" value="ECO:0007669"/>
    <property type="project" value="UniProtKB-SubCell"/>
</dbReference>
<dbReference type="GO" id="GO:0005829">
    <property type="term" value="C:cytosol"/>
    <property type="evidence" value="ECO:0000266"/>
    <property type="project" value="RGD"/>
</dbReference>
<dbReference type="GO" id="GO:0016020">
    <property type="term" value="C:membrane"/>
    <property type="evidence" value="ECO:0000266"/>
    <property type="project" value="RGD"/>
</dbReference>
<dbReference type="GO" id="GO:0034709">
    <property type="term" value="C:methylosome"/>
    <property type="evidence" value="ECO:0000250"/>
    <property type="project" value="UniProtKB"/>
</dbReference>
<dbReference type="GO" id="GO:0005634">
    <property type="term" value="C:nucleus"/>
    <property type="evidence" value="ECO:0000250"/>
    <property type="project" value="UniProtKB"/>
</dbReference>
<dbReference type="GO" id="GO:0034715">
    <property type="term" value="C:pICln-Sm protein complex"/>
    <property type="evidence" value="ECO:0000250"/>
    <property type="project" value="UniProtKB"/>
</dbReference>
<dbReference type="GO" id="GO:0005886">
    <property type="term" value="C:plasma membrane"/>
    <property type="evidence" value="ECO:0007669"/>
    <property type="project" value="InterPro"/>
</dbReference>
<dbReference type="GO" id="GO:0032991">
    <property type="term" value="C:protein-containing complex"/>
    <property type="evidence" value="ECO:0000266"/>
    <property type="project" value="RGD"/>
</dbReference>
<dbReference type="GO" id="GO:0005681">
    <property type="term" value="C:spliceosomal complex"/>
    <property type="evidence" value="ECO:0000318"/>
    <property type="project" value="GO_Central"/>
</dbReference>
<dbReference type="GO" id="GO:0005229">
    <property type="term" value="F:intracellularly calcium-gated chloride channel activity"/>
    <property type="evidence" value="ECO:0000266"/>
    <property type="project" value="RGD"/>
</dbReference>
<dbReference type="GO" id="GO:0008289">
    <property type="term" value="F:lipid binding"/>
    <property type="evidence" value="ECO:0000266"/>
    <property type="project" value="RGD"/>
</dbReference>
<dbReference type="GO" id="GO:0005267">
    <property type="term" value="F:potassium channel activity"/>
    <property type="evidence" value="ECO:0000266"/>
    <property type="project" value="RGD"/>
</dbReference>
<dbReference type="GO" id="GO:0036094">
    <property type="term" value="F:small molecule binding"/>
    <property type="evidence" value="ECO:0000266"/>
    <property type="project" value="RGD"/>
</dbReference>
<dbReference type="GO" id="GO:1990935">
    <property type="term" value="F:splicing factor binding"/>
    <property type="evidence" value="ECO:0000266"/>
    <property type="project" value="RGD"/>
</dbReference>
<dbReference type="GO" id="GO:0006884">
    <property type="term" value="P:cell volume homeostasis"/>
    <property type="evidence" value="ECO:0000315"/>
    <property type="project" value="RGD"/>
</dbReference>
<dbReference type="GO" id="GO:1902476">
    <property type="term" value="P:chloride transmembrane transport"/>
    <property type="evidence" value="ECO:0000266"/>
    <property type="project" value="RGD"/>
</dbReference>
<dbReference type="GO" id="GO:0006821">
    <property type="term" value="P:chloride transport"/>
    <property type="evidence" value="ECO:0000314"/>
    <property type="project" value="RGD"/>
</dbReference>
<dbReference type="GO" id="GO:0045292">
    <property type="term" value="P:mRNA cis splicing, via spliceosome"/>
    <property type="evidence" value="ECO:0000318"/>
    <property type="project" value="GO_Central"/>
</dbReference>
<dbReference type="GO" id="GO:0045794">
    <property type="term" value="P:negative regulation of cell volume"/>
    <property type="evidence" value="ECO:0000266"/>
    <property type="project" value="RGD"/>
</dbReference>
<dbReference type="GO" id="GO:0071805">
    <property type="term" value="P:potassium ion transmembrane transport"/>
    <property type="evidence" value="ECO:0000266"/>
    <property type="project" value="RGD"/>
</dbReference>
<dbReference type="GO" id="GO:0000387">
    <property type="term" value="P:spliceosomal snRNP assembly"/>
    <property type="evidence" value="ECO:0000250"/>
    <property type="project" value="UniProtKB"/>
</dbReference>
<dbReference type="FunFam" id="2.30.29.30:FF:000220">
    <property type="entry name" value="methylosome subunit pICln isoform X1"/>
    <property type="match status" value="1"/>
</dbReference>
<dbReference type="Gene3D" id="2.30.29.30">
    <property type="entry name" value="Pleckstrin-homology domain (PH domain)/Phosphotyrosine-binding domain (PTB)"/>
    <property type="match status" value="1"/>
</dbReference>
<dbReference type="InterPro" id="IPR003521">
    <property type="entry name" value="ICln"/>
</dbReference>
<dbReference type="InterPro" id="IPR039924">
    <property type="entry name" value="ICln/Lot5/Saf5"/>
</dbReference>
<dbReference type="InterPro" id="IPR011993">
    <property type="entry name" value="PH-like_dom_sf"/>
</dbReference>
<dbReference type="PANTHER" id="PTHR21399">
    <property type="entry name" value="CHLORIDE CONDUCTANCE REGULATORY PROTEIN ICLN"/>
    <property type="match status" value="1"/>
</dbReference>
<dbReference type="PANTHER" id="PTHR21399:SF0">
    <property type="entry name" value="METHYLOSOME SUBUNIT PICLN"/>
    <property type="match status" value="1"/>
</dbReference>
<dbReference type="Pfam" id="PF03517">
    <property type="entry name" value="Voldacs"/>
    <property type="match status" value="1"/>
</dbReference>
<dbReference type="PRINTS" id="PR01348">
    <property type="entry name" value="ICLNCHANNEL"/>
</dbReference>
<reference key="1">
    <citation type="journal article" date="1993" name="Biochim. Biophys. Acta">
        <title>Molecular cloning and expression of a rat cDNA encoding MDCK-type chloride channel.</title>
        <authorList>
            <person name="Abe T."/>
            <person name="Takeuchi K."/>
            <person name="Ishii K."/>
            <person name="Abe K."/>
        </authorList>
    </citation>
    <scope>NUCLEOTIDE SEQUENCE [MRNA]</scope>
    <source>
        <strain>Sprague-Dawley</strain>
        <tissue>Kidney</tissue>
    </source>
</reference>
<reference key="2">
    <citation type="journal article" date="1993" name="Biochem. Biophys. Res. Commun.">
        <title>Tissue expression of mRNA of chloride channel from MDCK cells and its regulation by protein kinases.</title>
        <authorList>
            <person name="Ishibashi K."/>
            <person name="Sasaki S."/>
            <person name="Uchida S."/>
            <person name="Imai T."/>
            <person name="Marumo F."/>
        </authorList>
    </citation>
    <scope>NUCLEOTIDE SEQUENCE [MRNA]</scope>
</reference>
<reference key="3">
    <citation type="journal article" date="1994" name="Cell">
        <title>Molecular characterization of a swelling-induced chloride conductance regulatory protein, pICln.</title>
        <authorList>
            <person name="Krapivinsky G.B."/>
            <person name="Ackerman M.J."/>
            <person name="Gordon E.A."/>
            <person name="Krapivinsky L.D."/>
            <person name="Clapham D.E."/>
        </authorList>
    </citation>
    <scope>NUCLEOTIDE SEQUENCE [MRNA]</scope>
    <source>
        <tissue>Neonatal heart atrium</tissue>
    </source>
</reference>
<reference key="4">
    <citation type="journal article" date="2012" name="Nat. Commun.">
        <title>Quantitative maps of protein phosphorylation sites across 14 different rat organs and tissues.</title>
        <authorList>
            <person name="Lundby A."/>
            <person name="Secher A."/>
            <person name="Lage K."/>
            <person name="Nordsborg N.B."/>
            <person name="Dmytriyev A."/>
            <person name="Lundby C."/>
            <person name="Olsen J.V."/>
        </authorList>
    </citation>
    <scope>PHOSPHORYLATION [LARGE SCALE ANALYSIS] AT SER-95</scope>
    <scope>IDENTIFICATION BY MASS SPECTROMETRY [LARGE SCALE ANALYSIS]</scope>
</reference>
<sequence length="236" mass="26092">MSFLKSFPPPGSADGLRLQQPDTEAVLNGKGLGTGTLYIAESRLSWLDGSGLGFSLEYPTISLHAVSRDPNAYPQEHLYVMVNARFGEESKEPFSDEDEDDNDDVEPISEFRFVPSDKSALEAMFTAMCECQALHPDPEDEDSDDYDGEEYDVEAHEQGQGDIPTFYTYEEGLSHLTAEGQATLERLEGMLSQSVSSQYNMAGVRTEDSVRTYEDGMEVETTPTVAGQFEDADVDH</sequence>
<keyword id="KW-0007">Acetylation</keyword>
<keyword id="KW-0963">Cytoplasm</keyword>
<keyword id="KW-0206">Cytoskeleton</keyword>
<keyword id="KW-0507">mRNA processing</keyword>
<keyword id="KW-0508">mRNA splicing</keyword>
<keyword id="KW-0539">Nucleus</keyword>
<keyword id="KW-0597">Phosphoprotein</keyword>
<keyword id="KW-1185">Reference proteome</keyword>
<name>ICLN_RAT</name>
<comment type="function">
    <text evidence="1">Involved in both the assembly of spliceosomal snRNPs and the methylation of Sm proteins (By similarity). Chaperone that regulates the assembly of spliceosomal U1, U2, U4 and U5 small nuclear ribonucleoproteins (snRNPs), the building blocks of the spliceosome, and thereby plays an important role in the splicing of cellular pre-mRNAs (By similarity). Most spliceosomal snRNPs contain a common set of Sm proteins SNRPB, SNRPD1, SNRPD2, SNRPD3, SNRPE, SNRPF and SNRPG that assemble in a heptameric protein ring on the Sm site of the small nuclear RNA to form the core snRNP (Sm core) (By similarity). In the cytosol, the Sm proteins SNRPD1, SNRPD2, SNRPE, SNRPF and SNRPG are trapped in an inactive 6S pICln-Sm complex by the chaperone CLNS1A that controls the assembly of the core snRNP (By similarity). Dissociation by the SMN complex of CLNS1A from the trapped Sm proteins and their transfer to an SMN-Sm complex triggers the assembly of core snRNPs and their transport to the nucleus (By similarity).</text>
</comment>
<comment type="subunit">
    <text evidence="1">Component of the methylosome, a 20S complex containing at least PRMT5/SKB1, WDR77/MEP50 and CLNS1A/pICln. May mediate SNRPD1 and SNRPD3 methylation. Forms a 6S pICln-Sm complex composed of CLNS1A/pICln, SNRPD1, SNRPD2, SNRPE, SNRPF and SNRPG; ring-like structure where CLNS1A/pICln mimics additional Sm proteins and which is unable to assemble into the core snRNP. Interacts with LSM10 and LSM11 (By similarity).</text>
</comment>
<comment type="subcellular location">
    <subcellularLocation>
        <location evidence="1">Cytoplasm</location>
        <location evidence="1">Cytosol</location>
    </subcellularLocation>
    <subcellularLocation>
        <location evidence="1">Nucleus</location>
    </subcellularLocation>
    <subcellularLocation>
        <location evidence="1">Cytoplasm</location>
        <location evidence="1">Cytoskeleton</location>
    </subcellularLocation>
    <text evidence="1">A small fraction is also associated with the cytoskeleton.</text>
</comment>
<comment type="tissue specificity">
    <text>Expressed in most tissues.</text>
</comment>
<comment type="similarity">
    <text evidence="3">Belongs to the pICln (TC 1.A.47) family.</text>
</comment>
<comment type="caution">
    <text evidence="3">Was originally thought to be a chloride channel.</text>
</comment>
<comment type="sequence caution" evidence="3">
    <conflict type="erroneous initiation">
        <sequence resource="EMBL-CDS" id="AAC37642"/>
    </conflict>
</comment>